<keyword id="KW-0966">Cell projection</keyword>
<keyword id="KW-0963">Cytoplasm</keyword>
<keyword id="KW-0333">Golgi apparatus</keyword>
<keyword id="KW-0479">Metal-binding</keyword>
<keyword id="KW-1185">Reference proteome</keyword>
<keyword id="KW-0677">Repeat</keyword>
<keyword id="KW-0728">SH3 domain</keyword>
<keyword id="KW-0808">Transferase</keyword>
<keyword id="KW-0832">Ubl conjugation</keyword>
<keyword id="KW-0833">Ubl conjugation pathway</keyword>
<keyword id="KW-0862">Zinc</keyword>
<keyword id="KW-0863">Zinc-finger</keyword>
<reference key="1">
    <citation type="journal article" date="2005" name="Dev. Biol.">
        <title>The assembly of POSH-JNK regulates Xenopus anterior neural development.</title>
        <authorList>
            <person name="Kim G.-H."/>
            <person name="Park E."/>
            <person name="Han J.-K."/>
        </authorList>
    </citation>
    <scope>NUCLEOTIDE SEQUENCE [MRNA]</scope>
    <scope>DEVELOPMENTAL STAGE</scope>
    <scope>FUNCTION</scope>
</reference>
<reference key="2">
    <citation type="submission" date="2004-05" db="EMBL/GenBank/DDBJ databases">
        <authorList>
            <consortium name="NIH - Xenopus Gene Collection (XGC) project"/>
        </authorList>
    </citation>
    <scope>NUCLEOTIDE SEQUENCE [LARGE SCALE MRNA]</scope>
    <source>
        <tissue>Oocyte</tissue>
    </source>
</reference>
<comment type="function">
    <text evidence="1 3 7">Has E3 ubiquitin-protein ligase activity. In the absence of an external substrate, it can catalyze self-ubiquitination. Acts as a scaffold protein that contributes to the effective activation of the JNK signaling pathway (By similarity). Plays an essential role in the anterior neural development.</text>
</comment>
<comment type="catalytic activity">
    <reaction evidence="3">
        <text>S-ubiquitinyl-[E2 ubiquitin-conjugating enzyme]-L-cysteine + [acceptor protein]-L-lysine = [E2 ubiquitin-conjugating enzyme]-L-cysteine + N(6)-ubiquitinyl-[acceptor protein]-L-lysine.</text>
        <dbReference type="EC" id="2.3.2.27"/>
    </reaction>
</comment>
<comment type="pathway">
    <text>Protein modification; protein ubiquitination.</text>
</comment>
<comment type="interaction">
    <interactant intactId="EBI-7734031">
        <id>Q6NRD3</id>
    </interactant>
    <interactant intactId="EBI-740220">
        <id>O14964</id>
        <label>HGS</label>
    </interactant>
    <organismsDiffer>true</organismsDiffer>
    <experiments>3</experiments>
</comment>
<comment type="subcellular location">
    <subcellularLocation>
        <location evidence="2">Cytoplasm</location>
        <location evidence="2">Perinuclear region</location>
    </subcellularLocation>
    <subcellularLocation>
        <location evidence="1">Cell projection</location>
        <location evidence="1">Lamellipodium</location>
    </subcellularLocation>
    <subcellularLocation>
        <location evidence="1">Golgi apparatus</location>
        <location evidence="1">trans-Golgi network</location>
    </subcellularLocation>
</comment>
<comment type="developmental stage">
    <text evidence="7">Expressed both maternally and zygotically throughout early development. Becomes visible in the animal hemisphere of the embryo during the cleavage and blastula stages. At the gastrula stages, expressed broadly throughout the marginal zone and animal pole tissues. At the neurula stages, it shows the restricted expression in dorsal tissue. At later stages, expressed in the cement gland, brain, somite, notochord and pronephros.</text>
</comment>
<comment type="domain">
    <text evidence="3">The RING finger domain is required for ubiquitin ligase activity and autoubiquitination.</text>
</comment>
<comment type="PTM">
    <text evidence="2">Autoubiquitinated. Ubiquitinated by SH3RF2, leading to proteasome-mediated degradation.</text>
</comment>
<comment type="similarity">
    <text evidence="8">Belongs to the SH3RF family.</text>
</comment>
<proteinExistence type="evidence at protein level"/>
<name>SH3R1_XENLA</name>
<organism>
    <name type="scientific">Xenopus laevis</name>
    <name type="common">African clawed frog</name>
    <dbReference type="NCBI Taxonomy" id="8355"/>
    <lineage>
        <taxon>Eukaryota</taxon>
        <taxon>Metazoa</taxon>
        <taxon>Chordata</taxon>
        <taxon>Craniata</taxon>
        <taxon>Vertebrata</taxon>
        <taxon>Euteleostomi</taxon>
        <taxon>Amphibia</taxon>
        <taxon>Batrachia</taxon>
        <taxon>Anura</taxon>
        <taxon>Pipoidea</taxon>
        <taxon>Pipidae</taxon>
        <taxon>Xenopodinae</taxon>
        <taxon>Xenopus</taxon>
        <taxon>Xenopus</taxon>
    </lineage>
</organism>
<sequence>MDESALLDLLECPVCLERLDASAKVLPCQHTFCKRCLLGIVSSRKELRCPECRTLVECGVDELPSNILLVRLLDGIRQRPRKAGDGGSAGNSTNALRAQGSVTTNGGLNDAQNTQSGQQRIQARSPPVRGVPQLPCAKALYNYEGKEPGDLKFNKGDIIVLRRQVDENWYHGEINGIHGFFPTNFVQIIKPLPQPPPQCKALYDFEVKDKEADKDCLPFLKDDILTVIRRVDENWAEGMLGDKIGIFPISYVEFNSAAKQLIELDKPSGADTGEGSSGTSHSGNSQKQADAKKNTKKRHSFTSLTMSNKSSQSVQNRHSMEISPPVLISSSNPTAAARISELTGLSCSAPSQDMNPPLLPPPPMATPVITSASSGAAAVAQRNIIGPVEQVPHLRTSARPSVFIAIYPYIPRKEDELELRKGEMFLVFERCQDGWFKGTSMHTSKIGVFPGNYVAPVTRALTTATPAKVAMATATTSNVVNLVTPTPPGAPCQKLPVSGVEFAKTSSTNGVSPAGVPGCHIQTSPQSKVLLHMSGQMTVNQARNAVRTAAAHSQDRPTAAVTPIQAQTPAASALPQQAAASQQVPPPLSAPAAYINAAMNISRPSVPAASAASSALPTAAFEAESSWKSSSGLSGCSFSENVSAPLNSAANKQDKDSKKEKKGLLKLLSGASTKRKPRSSPPHSPTQEVEQTNSEAAAALEGAVGPDIVPVIVNGRAAPCTVDCDSVSASTPAQDNRKPASLDNNIPIAPPPRQPCSSLGSVLNDSRPCERYRVMVSYPPQSEAELELKEGDIVFVHKKREDGWFKGTLQRNGKTGLFPGSFVENI</sequence>
<evidence type="ECO:0000250" key="1">
    <source>
        <dbReference type="UniProtKB" id="Q69ZI1"/>
    </source>
</evidence>
<evidence type="ECO:0000250" key="2">
    <source>
        <dbReference type="UniProtKB" id="Q71F54"/>
    </source>
</evidence>
<evidence type="ECO:0000250" key="3">
    <source>
        <dbReference type="UniProtKB" id="Q7Z6J0"/>
    </source>
</evidence>
<evidence type="ECO:0000255" key="4">
    <source>
        <dbReference type="PROSITE-ProRule" id="PRU00175"/>
    </source>
</evidence>
<evidence type="ECO:0000255" key="5">
    <source>
        <dbReference type="PROSITE-ProRule" id="PRU00192"/>
    </source>
</evidence>
<evidence type="ECO:0000256" key="6">
    <source>
        <dbReference type="SAM" id="MobiDB-lite"/>
    </source>
</evidence>
<evidence type="ECO:0000269" key="7">
    <source>
    </source>
</evidence>
<evidence type="ECO:0000305" key="8"/>
<dbReference type="EC" id="2.3.2.27" evidence="3"/>
<dbReference type="EMBL" id="AY762093">
    <property type="protein sequence ID" value="AAW83119.1"/>
    <property type="molecule type" value="mRNA"/>
</dbReference>
<dbReference type="EMBL" id="BC070823">
    <property type="protein sequence ID" value="AAH70823.1"/>
    <property type="molecule type" value="mRNA"/>
</dbReference>
<dbReference type="RefSeq" id="NP_001084814.1">
    <property type="nucleotide sequence ID" value="NM_001091345.1"/>
</dbReference>
<dbReference type="SMR" id="Q6NRD3"/>
<dbReference type="BioGRID" id="101221">
    <property type="interactions" value="3"/>
</dbReference>
<dbReference type="IntAct" id="Q6NRD3">
    <property type="interactions" value="2"/>
</dbReference>
<dbReference type="MINT" id="Q6NRD3"/>
<dbReference type="DNASU" id="431855"/>
<dbReference type="GeneID" id="431855"/>
<dbReference type="KEGG" id="xla:431855"/>
<dbReference type="AGR" id="Xenbase:XB-GENE-950810"/>
<dbReference type="CTD" id="431855"/>
<dbReference type="Xenbase" id="XB-GENE-950810">
    <property type="gene designation" value="sh3rf1.S"/>
</dbReference>
<dbReference type="OrthoDB" id="19092at2759"/>
<dbReference type="UniPathway" id="UPA00143"/>
<dbReference type="Proteomes" id="UP000186698">
    <property type="component" value="Chromosome 1S"/>
</dbReference>
<dbReference type="Bgee" id="431855">
    <property type="expression patterns" value="Expressed in egg cell and 19 other cell types or tissues"/>
</dbReference>
<dbReference type="GO" id="GO:0005829">
    <property type="term" value="C:cytosol"/>
    <property type="evidence" value="ECO:0000318"/>
    <property type="project" value="GO_Central"/>
</dbReference>
<dbReference type="GO" id="GO:0005794">
    <property type="term" value="C:Golgi apparatus"/>
    <property type="evidence" value="ECO:0007669"/>
    <property type="project" value="UniProtKB-SubCell"/>
</dbReference>
<dbReference type="GO" id="GO:0030027">
    <property type="term" value="C:lamellipodium"/>
    <property type="evidence" value="ECO:0000250"/>
    <property type="project" value="UniProtKB"/>
</dbReference>
<dbReference type="GO" id="GO:0048471">
    <property type="term" value="C:perinuclear region of cytoplasm"/>
    <property type="evidence" value="ECO:0007669"/>
    <property type="project" value="UniProtKB-SubCell"/>
</dbReference>
<dbReference type="GO" id="GO:0005078">
    <property type="term" value="F:MAP-kinase scaffold activity"/>
    <property type="evidence" value="ECO:0000250"/>
    <property type="project" value="UniProtKB"/>
</dbReference>
<dbReference type="GO" id="GO:0061630">
    <property type="term" value="F:ubiquitin protein ligase activity"/>
    <property type="evidence" value="ECO:0000250"/>
    <property type="project" value="UniProtKB"/>
</dbReference>
<dbReference type="GO" id="GO:0008270">
    <property type="term" value="F:zinc ion binding"/>
    <property type="evidence" value="ECO:0007669"/>
    <property type="project" value="UniProtKB-KW"/>
</dbReference>
<dbReference type="GO" id="GO:0043066">
    <property type="term" value="P:negative regulation of apoptotic process"/>
    <property type="evidence" value="ECO:0000318"/>
    <property type="project" value="GO_Central"/>
</dbReference>
<dbReference type="GO" id="GO:0001764">
    <property type="term" value="P:neuron migration"/>
    <property type="evidence" value="ECO:0000250"/>
    <property type="project" value="UniProtKB"/>
</dbReference>
<dbReference type="GO" id="GO:0046330">
    <property type="term" value="P:positive regulation of JNK cascade"/>
    <property type="evidence" value="ECO:0000250"/>
    <property type="project" value="UniProtKB"/>
</dbReference>
<dbReference type="GO" id="GO:0032436">
    <property type="term" value="P:positive regulation of proteasomal ubiquitin-dependent protein catabolic process"/>
    <property type="evidence" value="ECO:0000318"/>
    <property type="project" value="GO_Central"/>
</dbReference>
<dbReference type="GO" id="GO:0051865">
    <property type="term" value="P:protein autoubiquitination"/>
    <property type="evidence" value="ECO:0000250"/>
    <property type="project" value="UniProtKB"/>
</dbReference>
<dbReference type="GO" id="GO:0016567">
    <property type="term" value="P:protein ubiquitination"/>
    <property type="evidence" value="ECO:0000318"/>
    <property type="project" value="GO_Central"/>
</dbReference>
<dbReference type="GO" id="GO:0043370">
    <property type="term" value="P:regulation of CD4-positive, alpha-beta T cell differentiation"/>
    <property type="evidence" value="ECO:0000250"/>
    <property type="project" value="UniProtKB"/>
</dbReference>
<dbReference type="GO" id="GO:2000564">
    <property type="term" value="P:regulation of CD8-positive, alpha-beta T cell proliferation"/>
    <property type="evidence" value="ECO:0000250"/>
    <property type="project" value="UniProtKB"/>
</dbReference>
<dbReference type="CDD" id="cd16748">
    <property type="entry name" value="RING-HC_SH3RF1"/>
    <property type="match status" value="1"/>
</dbReference>
<dbReference type="CDD" id="cd11927">
    <property type="entry name" value="SH3_SH3RF1_1"/>
    <property type="match status" value="1"/>
</dbReference>
<dbReference type="CDD" id="cd11926">
    <property type="entry name" value="SH3_SH3RF1_3"/>
    <property type="match status" value="1"/>
</dbReference>
<dbReference type="CDD" id="cd11785">
    <property type="entry name" value="SH3_SH3RF_C"/>
    <property type="match status" value="1"/>
</dbReference>
<dbReference type="FunFam" id="3.30.40.10:FF:000077">
    <property type="entry name" value="E3 ubiquitin-protein ligase SH3RF1 isoform X1"/>
    <property type="match status" value="1"/>
</dbReference>
<dbReference type="FunFam" id="2.30.30.40:FF:000063">
    <property type="entry name" value="Putative E3 ubiquitin-protein ligase SH3RF1"/>
    <property type="match status" value="1"/>
</dbReference>
<dbReference type="FunFam" id="2.30.30.40:FF:000091">
    <property type="entry name" value="Putative E3 ubiquitin-protein ligase SH3RF1"/>
    <property type="match status" value="1"/>
</dbReference>
<dbReference type="FunFam" id="2.30.30.40:FF:000118">
    <property type="entry name" value="Putative E3 ubiquitin-protein ligase SH3RF1"/>
    <property type="match status" value="1"/>
</dbReference>
<dbReference type="FunFam" id="2.30.30.40:FF:000001">
    <property type="entry name" value="Sorbin and SH3 domain-containing protein 1 isoform 2"/>
    <property type="match status" value="1"/>
</dbReference>
<dbReference type="Gene3D" id="2.30.30.40">
    <property type="entry name" value="SH3 Domains"/>
    <property type="match status" value="4"/>
</dbReference>
<dbReference type="Gene3D" id="3.30.40.10">
    <property type="entry name" value="Zinc/RING finger domain, C3HC4 (zinc finger)"/>
    <property type="match status" value="1"/>
</dbReference>
<dbReference type="InterPro" id="IPR050384">
    <property type="entry name" value="Endophilin_SH3RF"/>
</dbReference>
<dbReference type="InterPro" id="IPR036028">
    <property type="entry name" value="SH3-like_dom_sf"/>
</dbReference>
<dbReference type="InterPro" id="IPR001452">
    <property type="entry name" value="SH3_domain"/>
</dbReference>
<dbReference type="InterPro" id="IPR035816">
    <property type="entry name" value="SH3RF1/SH3RF3_SH3_4"/>
</dbReference>
<dbReference type="InterPro" id="IPR027370">
    <property type="entry name" value="Znf-RING_euk"/>
</dbReference>
<dbReference type="InterPro" id="IPR001841">
    <property type="entry name" value="Znf_RING"/>
</dbReference>
<dbReference type="InterPro" id="IPR013083">
    <property type="entry name" value="Znf_RING/FYVE/PHD"/>
</dbReference>
<dbReference type="InterPro" id="IPR017907">
    <property type="entry name" value="Znf_RING_CS"/>
</dbReference>
<dbReference type="PANTHER" id="PTHR14167:SF116">
    <property type="entry name" value="CAP, ISOFORM AC"/>
    <property type="match status" value="1"/>
</dbReference>
<dbReference type="PANTHER" id="PTHR14167">
    <property type="entry name" value="SH3 DOMAIN-CONTAINING"/>
    <property type="match status" value="1"/>
</dbReference>
<dbReference type="Pfam" id="PF00018">
    <property type="entry name" value="SH3_1"/>
    <property type="match status" value="2"/>
</dbReference>
<dbReference type="Pfam" id="PF14604">
    <property type="entry name" value="SH3_9"/>
    <property type="match status" value="2"/>
</dbReference>
<dbReference type="Pfam" id="PF13445">
    <property type="entry name" value="zf-RING_UBOX"/>
    <property type="match status" value="1"/>
</dbReference>
<dbReference type="PRINTS" id="PR00499">
    <property type="entry name" value="P67PHOX"/>
</dbReference>
<dbReference type="PRINTS" id="PR00452">
    <property type="entry name" value="SH3DOMAIN"/>
</dbReference>
<dbReference type="SMART" id="SM00184">
    <property type="entry name" value="RING"/>
    <property type="match status" value="1"/>
</dbReference>
<dbReference type="SMART" id="SM00326">
    <property type="entry name" value="SH3"/>
    <property type="match status" value="4"/>
</dbReference>
<dbReference type="SUPFAM" id="SSF57850">
    <property type="entry name" value="RING/U-box"/>
    <property type="match status" value="1"/>
</dbReference>
<dbReference type="SUPFAM" id="SSF50044">
    <property type="entry name" value="SH3-domain"/>
    <property type="match status" value="4"/>
</dbReference>
<dbReference type="PROSITE" id="PS50002">
    <property type="entry name" value="SH3"/>
    <property type="match status" value="4"/>
</dbReference>
<dbReference type="PROSITE" id="PS00518">
    <property type="entry name" value="ZF_RING_1"/>
    <property type="match status" value="1"/>
</dbReference>
<dbReference type="PROSITE" id="PS50089">
    <property type="entry name" value="ZF_RING_2"/>
    <property type="match status" value="1"/>
</dbReference>
<feature type="chain" id="PRO_0000334156" description="E3 ubiquitin-protein ligase SH3RF1">
    <location>
        <begin position="1"/>
        <end position="826"/>
    </location>
</feature>
<feature type="domain" description="SH3 1" evidence="5">
    <location>
        <begin position="132"/>
        <end position="191"/>
    </location>
</feature>
<feature type="domain" description="SH3 2" evidence="5">
    <location>
        <begin position="194"/>
        <end position="257"/>
    </location>
</feature>
<feature type="domain" description="SH3 3" evidence="5">
    <location>
        <begin position="398"/>
        <end position="459"/>
    </location>
</feature>
<feature type="domain" description="SH3 4" evidence="5">
    <location>
        <begin position="767"/>
        <end position="826"/>
    </location>
</feature>
<feature type="zinc finger region" description="RING-type" evidence="4">
    <location>
        <begin position="12"/>
        <end position="53"/>
    </location>
</feature>
<feature type="region of interest" description="Disordered" evidence="6">
    <location>
        <begin position="80"/>
        <end position="130"/>
    </location>
</feature>
<feature type="region of interest" description="Disordered" evidence="6">
    <location>
        <begin position="266"/>
        <end position="319"/>
    </location>
</feature>
<feature type="region of interest" description="Disordered" evidence="6">
    <location>
        <begin position="647"/>
        <end position="694"/>
    </location>
</feature>
<feature type="region of interest" description="Disordered" evidence="6">
    <location>
        <begin position="725"/>
        <end position="759"/>
    </location>
</feature>
<feature type="compositionally biased region" description="Polar residues" evidence="6">
    <location>
        <begin position="90"/>
        <end position="122"/>
    </location>
</feature>
<feature type="compositionally biased region" description="Low complexity" evidence="6">
    <location>
        <begin position="273"/>
        <end position="285"/>
    </location>
</feature>
<feature type="compositionally biased region" description="Polar residues" evidence="6">
    <location>
        <begin position="301"/>
        <end position="317"/>
    </location>
</feature>
<feature type="compositionally biased region" description="Basic and acidic residues" evidence="6">
    <location>
        <begin position="652"/>
        <end position="663"/>
    </location>
</feature>
<feature type="sequence conflict" description="In Ref. 1; AAW83119." evidence="8" ref="1">
    <original>R</original>
    <variation>G</variation>
    <location>
        <position position="18"/>
    </location>
</feature>
<feature type="sequence conflict" description="In Ref. 1; AAW83119." evidence="8" ref="1">
    <original>K</original>
    <variation>E</variation>
    <location>
        <position position="293"/>
    </location>
</feature>
<feature type="sequence conflict" description="In Ref. 1; AAW83119." evidence="8" ref="1">
    <original>V</original>
    <variation>M</variation>
    <location>
        <position position="448"/>
    </location>
</feature>
<feature type="sequence conflict" description="In Ref. 1; AAW83119." evidence="8" ref="1">
    <original>P</original>
    <variation>S</variation>
    <location>
        <position position="751"/>
    </location>
</feature>
<accession>Q6NRD3</accession>
<accession>Q3L1I1</accession>
<protein>
    <recommendedName>
        <fullName>E3 ubiquitin-protein ligase SH3RF1</fullName>
        <ecNumber evidence="3">2.3.2.27</ecNumber>
    </recommendedName>
    <alternativeName>
        <fullName>Plenty of SH3s</fullName>
        <shortName>Protein POSH</shortName>
        <shortName>xPOSH</shortName>
    </alternativeName>
    <alternativeName>
        <fullName evidence="8">RING-type E3 ubiquitin transferase SH3RF1</fullName>
    </alternativeName>
    <alternativeName>
        <fullName>SH3 domain-containing RING finger protein 1</fullName>
    </alternativeName>
</protein>
<gene>
    <name type="primary">sh3rf1</name>
    <name type="synonym">posh</name>
</gene>